<reference key="1">
    <citation type="journal article" date="2005" name="PLoS Biol.">
        <title>The genome sequence of Rickettsia felis identifies the first putative conjugative plasmid in an obligate intracellular parasite.</title>
        <authorList>
            <person name="Ogata H."/>
            <person name="Renesto P."/>
            <person name="Audic S."/>
            <person name="Robert C."/>
            <person name="Blanc G."/>
            <person name="Fournier P.-E."/>
            <person name="Parinello H."/>
            <person name="Claverie J.-M."/>
            <person name="Raoult D."/>
        </authorList>
    </citation>
    <scope>NUCLEOTIDE SEQUENCE [LARGE SCALE GENOMIC DNA]</scope>
    <source>
        <strain>ATCC VR-1525 / URRWXCal2</strain>
    </source>
</reference>
<dbReference type="EC" id="6.1.1.17" evidence="1"/>
<dbReference type="EMBL" id="CP000053">
    <property type="protein sequence ID" value="AAY61380.1"/>
    <property type="molecule type" value="Genomic_DNA"/>
</dbReference>
<dbReference type="SMR" id="Q4UM43"/>
<dbReference type="STRING" id="315456.RF_0529"/>
<dbReference type="KEGG" id="rfe:RF_0529"/>
<dbReference type="eggNOG" id="COG0008">
    <property type="taxonomic scope" value="Bacteria"/>
</dbReference>
<dbReference type="HOGENOM" id="CLU_015768_6_1_5"/>
<dbReference type="OrthoDB" id="9807503at2"/>
<dbReference type="Proteomes" id="UP000008548">
    <property type="component" value="Chromosome"/>
</dbReference>
<dbReference type="GO" id="GO:0005737">
    <property type="term" value="C:cytoplasm"/>
    <property type="evidence" value="ECO:0007669"/>
    <property type="project" value="UniProtKB-SubCell"/>
</dbReference>
<dbReference type="GO" id="GO:0005524">
    <property type="term" value="F:ATP binding"/>
    <property type="evidence" value="ECO:0007669"/>
    <property type="project" value="UniProtKB-UniRule"/>
</dbReference>
<dbReference type="GO" id="GO:0004818">
    <property type="term" value="F:glutamate-tRNA ligase activity"/>
    <property type="evidence" value="ECO:0007669"/>
    <property type="project" value="UniProtKB-UniRule"/>
</dbReference>
<dbReference type="GO" id="GO:0000049">
    <property type="term" value="F:tRNA binding"/>
    <property type="evidence" value="ECO:0007669"/>
    <property type="project" value="InterPro"/>
</dbReference>
<dbReference type="GO" id="GO:0008270">
    <property type="term" value="F:zinc ion binding"/>
    <property type="evidence" value="ECO:0007669"/>
    <property type="project" value="InterPro"/>
</dbReference>
<dbReference type="GO" id="GO:0006424">
    <property type="term" value="P:glutamyl-tRNA aminoacylation"/>
    <property type="evidence" value="ECO:0007669"/>
    <property type="project" value="UniProtKB-UniRule"/>
</dbReference>
<dbReference type="CDD" id="cd00808">
    <property type="entry name" value="GluRS_core"/>
    <property type="match status" value="1"/>
</dbReference>
<dbReference type="Gene3D" id="1.10.10.350">
    <property type="match status" value="1"/>
</dbReference>
<dbReference type="Gene3D" id="3.40.50.620">
    <property type="entry name" value="HUPs"/>
    <property type="match status" value="1"/>
</dbReference>
<dbReference type="HAMAP" id="MF_00022">
    <property type="entry name" value="Glu_tRNA_synth_type1"/>
    <property type="match status" value="1"/>
</dbReference>
<dbReference type="InterPro" id="IPR045462">
    <property type="entry name" value="aa-tRNA-synth_I_cd-bd"/>
</dbReference>
<dbReference type="InterPro" id="IPR020751">
    <property type="entry name" value="aa-tRNA-synth_I_codon-bd_sub2"/>
</dbReference>
<dbReference type="InterPro" id="IPR001412">
    <property type="entry name" value="aa-tRNA-synth_I_CS"/>
</dbReference>
<dbReference type="InterPro" id="IPR008925">
    <property type="entry name" value="aa_tRNA-synth_I_cd-bd_sf"/>
</dbReference>
<dbReference type="InterPro" id="IPR004527">
    <property type="entry name" value="Glu-tRNA-ligase_bac/mito"/>
</dbReference>
<dbReference type="InterPro" id="IPR000924">
    <property type="entry name" value="Glu/Gln-tRNA-synth"/>
</dbReference>
<dbReference type="InterPro" id="IPR020058">
    <property type="entry name" value="Glu/Gln-tRNA-synth_Ib_cat-dom"/>
</dbReference>
<dbReference type="InterPro" id="IPR049940">
    <property type="entry name" value="GluQ/Sye"/>
</dbReference>
<dbReference type="InterPro" id="IPR033910">
    <property type="entry name" value="GluRS_core"/>
</dbReference>
<dbReference type="InterPro" id="IPR014729">
    <property type="entry name" value="Rossmann-like_a/b/a_fold"/>
</dbReference>
<dbReference type="NCBIfam" id="TIGR00464">
    <property type="entry name" value="gltX_bact"/>
    <property type="match status" value="1"/>
</dbReference>
<dbReference type="PANTHER" id="PTHR43311">
    <property type="entry name" value="GLUTAMATE--TRNA LIGASE"/>
    <property type="match status" value="1"/>
</dbReference>
<dbReference type="PANTHER" id="PTHR43311:SF2">
    <property type="entry name" value="GLUTAMATE--TRNA LIGASE, MITOCHONDRIAL-RELATED"/>
    <property type="match status" value="1"/>
</dbReference>
<dbReference type="Pfam" id="PF19269">
    <property type="entry name" value="Anticodon_2"/>
    <property type="match status" value="1"/>
</dbReference>
<dbReference type="Pfam" id="PF00749">
    <property type="entry name" value="tRNA-synt_1c"/>
    <property type="match status" value="1"/>
</dbReference>
<dbReference type="PRINTS" id="PR00987">
    <property type="entry name" value="TRNASYNTHGLU"/>
</dbReference>
<dbReference type="SUPFAM" id="SSF48163">
    <property type="entry name" value="An anticodon-binding domain of class I aminoacyl-tRNA synthetases"/>
    <property type="match status" value="1"/>
</dbReference>
<dbReference type="SUPFAM" id="SSF52374">
    <property type="entry name" value="Nucleotidylyl transferase"/>
    <property type="match status" value="1"/>
</dbReference>
<dbReference type="PROSITE" id="PS00178">
    <property type="entry name" value="AA_TRNA_LIGASE_I"/>
    <property type="match status" value="1"/>
</dbReference>
<keyword id="KW-0030">Aminoacyl-tRNA synthetase</keyword>
<keyword id="KW-0067">ATP-binding</keyword>
<keyword id="KW-0963">Cytoplasm</keyword>
<keyword id="KW-0436">Ligase</keyword>
<keyword id="KW-0547">Nucleotide-binding</keyword>
<keyword id="KW-0648">Protein biosynthesis</keyword>
<feature type="chain" id="PRO_0000237396" description="Glutamate--tRNA ligase 1">
    <location>
        <begin position="1"/>
        <end position="447"/>
    </location>
</feature>
<feature type="short sequence motif" description="'HIGH' region" evidence="1">
    <location>
        <begin position="10"/>
        <end position="20"/>
    </location>
</feature>
<feature type="short sequence motif" description="'KMSKS' region" evidence="1">
    <location>
        <begin position="240"/>
        <end position="244"/>
    </location>
</feature>
<feature type="binding site" evidence="1">
    <location>
        <position position="243"/>
    </location>
    <ligand>
        <name>ATP</name>
        <dbReference type="ChEBI" id="CHEBI:30616"/>
    </ligand>
</feature>
<comment type="function">
    <text evidence="1">Catalyzes the attachment of glutamate to tRNA(Glu) in a two-step reaction: glutamate is first activated by ATP to form Glu-AMP and then transferred to the acceptor end of tRNA(Glu).</text>
</comment>
<comment type="catalytic activity">
    <reaction evidence="1">
        <text>tRNA(Glu) + L-glutamate + ATP = L-glutamyl-tRNA(Glu) + AMP + diphosphate</text>
        <dbReference type="Rhea" id="RHEA:23540"/>
        <dbReference type="Rhea" id="RHEA-COMP:9663"/>
        <dbReference type="Rhea" id="RHEA-COMP:9680"/>
        <dbReference type="ChEBI" id="CHEBI:29985"/>
        <dbReference type="ChEBI" id="CHEBI:30616"/>
        <dbReference type="ChEBI" id="CHEBI:33019"/>
        <dbReference type="ChEBI" id="CHEBI:78442"/>
        <dbReference type="ChEBI" id="CHEBI:78520"/>
        <dbReference type="ChEBI" id="CHEBI:456215"/>
        <dbReference type="EC" id="6.1.1.17"/>
    </reaction>
</comment>
<comment type="subunit">
    <text evidence="1">Monomer.</text>
</comment>
<comment type="subcellular location">
    <subcellularLocation>
        <location evidence="1">Cytoplasm</location>
    </subcellularLocation>
</comment>
<comment type="similarity">
    <text evidence="1">Belongs to the class-I aminoacyl-tRNA synthetase family. Glutamate--tRNA ligase type 1 subfamily.</text>
</comment>
<organism>
    <name type="scientific">Rickettsia felis (strain ATCC VR-1525 / URRWXCal2)</name>
    <name type="common">Rickettsia azadi</name>
    <dbReference type="NCBI Taxonomy" id="315456"/>
    <lineage>
        <taxon>Bacteria</taxon>
        <taxon>Pseudomonadati</taxon>
        <taxon>Pseudomonadota</taxon>
        <taxon>Alphaproteobacteria</taxon>
        <taxon>Rickettsiales</taxon>
        <taxon>Rickettsiaceae</taxon>
        <taxon>Rickettsieae</taxon>
        <taxon>Rickettsia</taxon>
        <taxon>spotted fever group</taxon>
    </lineage>
</organism>
<proteinExistence type="inferred from homology"/>
<protein>
    <recommendedName>
        <fullName evidence="1">Glutamate--tRNA ligase 1</fullName>
        <ecNumber evidence="1">6.1.1.17</ecNumber>
    </recommendedName>
    <alternativeName>
        <fullName evidence="1">Glutamyl-tRNA synthetase 1</fullName>
        <shortName evidence="1">GluRS 1</shortName>
    </alternativeName>
</protein>
<sequence length="447" mass="51807">MTKIITRFAPSPTGMLHVGNIRAALLNWLYAKKHNGQFILRFDDTDLERSKQEYKDAIEEDLKFLNLNWDQTFNQLSRLSRYDEIKNLLLDKKRLYACYETPEELELKRKFQLSKGLPPIYDRASLNLTEEQTQKYIEQGRKPHYRFLVNHEPISWHDMIKGEVKYDGKALSEPIVIRADGSMTYMLCSVIDDIDYDITHIIRGEDHVSNTAIQIQMFEALNTTPPTFGHLSLIINKDEKISKRVGGFEITTLRKEIGLEAMAIASFFSLLGSSAQILPYKSMEKLANQFEISSFSKSPTIYQPEDLERLNHKLLISLDFDEVKNHLKEIDAEYIDENFWLSVRPNLQKLRDVKDWWEICHKTPNVKSLNLDKEYLKQAAEVLPQGKITKDSWSIWTKEITNITGKKGKELFLPLRLALTGRESGPEIASVLPLIDREEIIKRLTSA</sequence>
<name>SYE1_RICFE</name>
<evidence type="ECO:0000255" key="1">
    <source>
        <dbReference type="HAMAP-Rule" id="MF_00022"/>
    </source>
</evidence>
<accession>Q4UM43</accession>
<gene>
    <name evidence="1" type="primary">gltX1</name>
    <name type="ordered locus">RF_0529</name>
</gene>